<accession>P32045</accession>
<keyword id="KW-0134">Cell wall</keyword>
<keyword id="KW-1015">Disulfide bond</keyword>
<keyword id="KW-0568">Pathogenesis-related protein</keyword>
<keyword id="KW-0611">Plant defense</keyword>
<keyword id="KW-1185">Reference proteome</keyword>
<keyword id="KW-0964">Secreted</keyword>
<keyword id="KW-0732">Signal</keyword>
<reference key="1">
    <citation type="journal article" date="1991" name="Mol. Plant Microbe Interact.">
        <title>Tobacco and tomato PR proteins homologous to win and pro-hevein lack the 'hevein' domain.</title>
        <authorList>
            <person name="Linthorst H.J.M."/>
            <person name="Dankash N."/>
            <person name="Brederode F.T."/>
            <person name="van Kan J.A.L."/>
            <person name="de Wit P.J.G.M."/>
            <person name="Bol J.F."/>
        </authorList>
    </citation>
    <scope>NUCLEOTIDE SEQUENCE [MRNA]</scope>
    <source>
        <tissue>Leaf</tissue>
    </source>
</reference>
<feature type="signal peptide" evidence="2">
    <location>
        <begin position="1"/>
        <end position="23"/>
    </location>
</feature>
<feature type="chain" id="PRO_0000002790" description="Pathogenesis-related protein P2">
    <location>
        <begin position="24"/>
        <end position="143"/>
    </location>
</feature>
<feature type="domain" description="Barwin" evidence="3">
    <location>
        <begin position="24"/>
        <end position="143"/>
    </location>
</feature>
<feature type="disulfide bond" evidence="1">
    <location>
        <begin position="52"/>
        <end position="84"/>
    </location>
</feature>
<feature type="disulfide bond" evidence="1">
    <location>
        <begin position="73"/>
        <end position="107"/>
    </location>
</feature>
<feature type="disulfide bond" evidence="1">
    <location>
        <begin position="87"/>
        <end position="143"/>
    </location>
</feature>
<sequence length="143" mass="16026">MERVNKLCVAFFVINMMMAVAAAQSATNVRATYHLYNPQNINWDLRTASVYCATWDADKPLEWRRRYGWTAFCGPAGPTGQASCGRCLRVTNTGTGTQETVRIVDQCRNGGLDLDVNVFNRLDTNGLGYQRGNLNVNYEFVNC</sequence>
<name>PRP2_SOLLC</name>
<organism>
    <name type="scientific">Solanum lycopersicum</name>
    <name type="common">Tomato</name>
    <name type="synonym">Lycopersicon esculentum</name>
    <dbReference type="NCBI Taxonomy" id="4081"/>
    <lineage>
        <taxon>Eukaryota</taxon>
        <taxon>Viridiplantae</taxon>
        <taxon>Streptophyta</taxon>
        <taxon>Embryophyta</taxon>
        <taxon>Tracheophyta</taxon>
        <taxon>Spermatophyta</taxon>
        <taxon>Magnoliopsida</taxon>
        <taxon>eudicotyledons</taxon>
        <taxon>Gunneridae</taxon>
        <taxon>Pentapetalae</taxon>
        <taxon>asterids</taxon>
        <taxon>lamiids</taxon>
        <taxon>Solanales</taxon>
        <taxon>Solanaceae</taxon>
        <taxon>Solanoideae</taxon>
        <taxon>Solaneae</taxon>
        <taxon>Solanum</taxon>
        <taxon>Solanum subgen. Lycopersicon</taxon>
    </lineage>
</organism>
<proteinExistence type="evidence at transcript level"/>
<dbReference type="EMBL" id="X58548">
    <property type="protein sequence ID" value="CAA41439.1"/>
    <property type="molecule type" value="mRNA"/>
</dbReference>
<dbReference type="PIR" id="S23801">
    <property type="entry name" value="S23801"/>
</dbReference>
<dbReference type="RefSeq" id="NP_001234083.1">
    <property type="nucleotide sequence ID" value="NM_001247154.1"/>
</dbReference>
<dbReference type="SMR" id="P32045"/>
<dbReference type="FunCoup" id="P32045">
    <property type="interactions" value="140"/>
</dbReference>
<dbReference type="STRING" id="4081.P32045"/>
<dbReference type="PaxDb" id="4081-Solyc01g097240.2.1"/>
<dbReference type="ProMEX" id="P32045"/>
<dbReference type="EnsemblPlants" id="Solyc01g097240.3.1">
    <property type="protein sequence ID" value="Solyc01g097240.3.1"/>
    <property type="gene ID" value="Solyc01g097240.3"/>
</dbReference>
<dbReference type="GeneID" id="544069"/>
<dbReference type="Gramene" id="Solyc01g097240.3.1">
    <property type="protein sequence ID" value="Solyc01g097240.3.1"/>
    <property type="gene ID" value="Solyc01g097240.3"/>
</dbReference>
<dbReference type="KEGG" id="sly:544069"/>
<dbReference type="eggNOG" id="KOG4742">
    <property type="taxonomic scope" value="Eukaryota"/>
</dbReference>
<dbReference type="HOGENOM" id="CLU_117368_0_0_1"/>
<dbReference type="InParanoid" id="P32045"/>
<dbReference type="OMA" id="LASIMNW"/>
<dbReference type="OrthoDB" id="5985073at2759"/>
<dbReference type="PhylomeDB" id="P32045"/>
<dbReference type="Proteomes" id="UP000004994">
    <property type="component" value="Chromosome 1"/>
</dbReference>
<dbReference type="ExpressionAtlas" id="P32045">
    <property type="expression patterns" value="baseline and differential"/>
</dbReference>
<dbReference type="GO" id="GO:0005576">
    <property type="term" value="C:extracellular region"/>
    <property type="evidence" value="ECO:0007669"/>
    <property type="project" value="UniProtKB-KW"/>
</dbReference>
<dbReference type="GO" id="GO:0004540">
    <property type="term" value="F:RNA nuclease activity"/>
    <property type="evidence" value="ECO:0007669"/>
    <property type="project" value="InterPro"/>
</dbReference>
<dbReference type="GO" id="GO:0042742">
    <property type="term" value="P:defense response to bacterium"/>
    <property type="evidence" value="ECO:0007669"/>
    <property type="project" value="InterPro"/>
</dbReference>
<dbReference type="GO" id="GO:0050832">
    <property type="term" value="P:defense response to fungus"/>
    <property type="evidence" value="ECO:0007669"/>
    <property type="project" value="InterPro"/>
</dbReference>
<dbReference type="CDD" id="cd22777">
    <property type="entry name" value="DPBB_barwin-like"/>
    <property type="match status" value="1"/>
</dbReference>
<dbReference type="FunFam" id="2.40.40.10:FF:000007">
    <property type="entry name" value="Papaya barwin-like protein"/>
    <property type="match status" value="1"/>
</dbReference>
<dbReference type="Gene3D" id="2.40.40.10">
    <property type="entry name" value="RlpA-like domain"/>
    <property type="match status" value="1"/>
</dbReference>
<dbReference type="InterPro" id="IPR018226">
    <property type="entry name" value="Barwin_CS"/>
</dbReference>
<dbReference type="InterPro" id="IPR001153">
    <property type="entry name" value="Barwin_dom"/>
</dbReference>
<dbReference type="InterPro" id="IPR044301">
    <property type="entry name" value="PR4"/>
</dbReference>
<dbReference type="InterPro" id="IPR036908">
    <property type="entry name" value="RlpA-like_sf"/>
</dbReference>
<dbReference type="PANTHER" id="PTHR46351:SF6">
    <property type="entry name" value="PATHOGENESIS-RELATED PROTEIN PR-4A"/>
    <property type="match status" value="1"/>
</dbReference>
<dbReference type="PANTHER" id="PTHR46351">
    <property type="entry name" value="WOUND-INDUCED PROTEIN WIN2"/>
    <property type="match status" value="1"/>
</dbReference>
<dbReference type="Pfam" id="PF00967">
    <property type="entry name" value="Barwin"/>
    <property type="match status" value="1"/>
</dbReference>
<dbReference type="PRINTS" id="PR00602">
    <property type="entry name" value="BARWIN"/>
</dbReference>
<dbReference type="SUPFAM" id="SSF50685">
    <property type="entry name" value="Barwin-like endoglucanases"/>
    <property type="match status" value="1"/>
</dbReference>
<dbReference type="PROSITE" id="PS00771">
    <property type="entry name" value="BARWIN_1"/>
    <property type="match status" value="1"/>
</dbReference>
<dbReference type="PROSITE" id="PS00772">
    <property type="entry name" value="BARWIN_2"/>
    <property type="match status" value="1"/>
</dbReference>
<dbReference type="PROSITE" id="PS51174">
    <property type="entry name" value="BARWIN_3"/>
    <property type="match status" value="1"/>
</dbReference>
<protein>
    <recommendedName>
        <fullName>Pathogenesis-related protein P2</fullName>
    </recommendedName>
</protein>
<comment type="subcellular location">
    <subcellularLocation>
        <location evidence="1">Secreted</location>
        <location evidence="1">Cell wall</location>
    </subcellularLocation>
</comment>
<comment type="induction">
    <text>By infection with Cladosporium fulvum.</text>
</comment>
<evidence type="ECO:0000250" key="1"/>
<evidence type="ECO:0000255" key="2"/>
<evidence type="ECO:0000255" key="3">
    <source>
        <dbReference type="PROSITE-ProRule" id="PRU00527"/>
    </source>
</evidence>